<dbReference type="EC" id="6.1.1.17" evidence="1"/>
<dbReference type="EMBL" id="CP000661">
    <property type="protein sequence ID" value="ABP71976.1"/>
    <property type="molecule type" value="Genomic_DNA"/>
</dbReference>
<dbReference type="SMR" id="A4WX62"/>
<dbReference type="STRING" id="349102.Rsph17025_3092"/>
<dbReference type="KEGG" id="rsq:Rsph17025_3092"/>
<dbReference type="eggNOG" id="COG0008">
    <property type="taxonomic scope" value="Bacteria"/>
</dbReference>
<dbReference type="HOGENOM" id="CLU_015768_6_0_5"/>
<dbReference type="BioCyc" id="RSPH349102:G1G8M-3195-MONOMER"/>
<dbReference type="GO" id="GO:0005829">
    <property type="term" value="C:cytosol"/>
    <property type="evidence" value="ECO:0007669"/>
    <property type="project" value="TreeGrafter"/>
</dbReference>
<dbReference type="GO" id="GO:0005524">
    <property type="term" value="F:ATP binding"/>
    <property type="evidence" value="ECO:0007669"/>
    <property type="project" value="UniProtKB-UniRule"/>
</dbReference>
<dbReference type="GO" id="GO:0004818">
    <property type="term" value="F:glutamate-tRNA ligase activity"/>
    <property type="evidence" value="ECO:0007669"/>
    <property type="project" value="UniProtKB-UniRule"/>
</dbReference>
<dbReference type="GO" id="GO:0000049">
    <property type="term" value="F:tRNA binding"/>
    <property type="evidence" value="ECO:0007669"/>
    <property type="project" value="InterPro"/>
</dbReference>
<dbReference type="GO" id="GO:0008270">
    <property type="term" value="F:zinc ion binding"/>
    <property type="evidence" value="ECO:0007669"/>
    <property type="project" value="InterPro"/>
</dbReference>
<dbReference type="GO" id="GO:0006424">
    <property type="term" value="P:glutamyl-tRNA aminoacylation"/>
    <property type="evidence" value="ECO:0007669"/>
    <property type="project" value="UniProtKB-UniRule"/>
</dbReference>
<dbReference type="CDD" id="cd00808">
    <property type="entry name" value="GluRS_core"/>
    <property type="match status" value="1"/>
</dbReference>
<dbReference type="FunFam" id="3.40.50.620:FF:000007">
    <property type="entry name" value="Glutamate--tRNA ligase"/>
    <property type="match status" value="1"/>
</dbReference>
<dbReference type="Gene3D" id="1.10.10.350">
    <property type="match status" value="1"/>
</dbReference>
<dbReference type="Gene3D" id="3.40.50.620">
    <property type="entry name" value="HUPs"/>
    <property type="match status" value="1"/>
</dbReference>
<dbReference type="HAMAP" id="MF_00022">
    <property type="entry name" value="Glu_tRNA_synth_type1"/>
    <property type="match status" value="1"/>
</dbReference>
<dbReference type="InterPro" id="IPR045462">
    <property type="entry name" value="aa-tRNA-synth_I_cd-bd"/>
</dbReference>
<dbReference type="InterPro" id="IPR020751">
    <property type="entry name" value="aa-tRNA-synth_I_codon-bd_sub2"/>
</dbReference>
<dbReference type="InterPro" id="IPR001412">
    <property type="entry name" value="aa-tRNA-synth_I_CS"/>
</dbReference>
<dbReference type="InterPro" id="IPR008925">
    <property type="entry name" value="aa_tRNA-synth_I_cd-bd_sf"/>
</dbReference>
<dbReference type="InterPro" id="IPR004527">
    <property type="entry name" value="Glu-tRNA-ligase_bac/mito"/>
</dbReference>
<dbReference type="InterPro" id="IPR000924">
    <property type="entry name" value="Glu/Gln-tRNA-synth"/>
</dbReference>
<dbReference type="InterPro" id="IPR020058">
    <property type="entry name" value="Glu/Gln-tRNA-synth_Ib_cat-dom"/>
</dbReference>
<dbReference type="InterPro" id="IPR049940">
    <property type="entry name" value="GluQ/Sye"/>
</dbReference>
<dbReference type="InterPro" id="IPR033910">
    <property type="entry name" value="GluRS_core"/>
</dbReference>
<dbReference type="InterPro" id="IPR014729">
    <property type="entry name" value="Rossmann-like_a/b/a_fold"/>
</dbReference>
<dbReference type="NCBIfam" id="TIGR00464">
    <property type="entry name" value="gltX_bact"/>
    <property type="match status" value="1"/>
</dbReference>
<dbReference type="PANTHER" id="PTHR43311">
    <property type="entry name" value="GLUTAMATE--TRNA LIGASE"/>
    <property type="match status" value="1"/>
</dbReference>
<dbReference type="PANTHER" id="PTHR43311:SF2">
    <property type="entry name" value="GLUTAMATE--TRNA LIGASE, MITOCHONDRIAL-RELATED"/>
    <property type="match status" value="1"/>
</dbReference>
<dbReference type="Pfam" id="PF19269">
    <property type="entry name" value="Anticodon_2"/>
    <property type="match status" value="1"/>
</dbReference>
<dbReference type="Pfam" id="PF00749">
    <property type="entry name" value="tRNA-synt_1c"/>
    <property type="match status" value="1"/>
</dbReference>
<dbReference type="PRINTS" id="PR00987">
    <property type="entry name" value="TRNASYNTHGLU"/>
</dbReference>
<dbReference type="SUPFAM" id="SSF48163">
    <property type="entry name" value="An anticodon-binding domain of class I aminoacyl-tRNA synthetases"/>
    <property type="match status" value="1"/>
</dbReference>
<dbReference type="SUPFAM" id="SSF52374">
    <property type="entry name" value="Nucleotidylyl transferase"/>
    <property type="match status" value="1"/>
</dbReference>
<dbReference type="PROSITE" id="PS00178">
    <property type="entry name" value="AA_TRNA_LIGASE_I"/>
    <property type="match status" value="1"/>
</dbReference>
<sequence>MSAASEKPVVTRFAPSPTGYLHIGGARTALFNWLFARGRKGTFLLRIEDTDRERSTPEATDAILRGLTWLGLDWDGEVVSQFARKDRHAEVAREMLARGAAYKCFSTQDEIEAFREAARAEGRSTLFRSPWREADPSTHPDAPYVIRMKAPRTGETVIADRVQGTVRFQNETLDDMVVLRSDGTPTYMLAVVVDDHDMGVTHVIRGDDHLNNAARQTMVYEAMGWEVPIWAHIPLIHGPDGKKLSKRHGALGVEEYQAMGYPAAGMRNYLTRLGWAHGDDEFFTSEQAMAWFDLEGIGRSPARLDFKKLENVCGQHIAVMDDAAAMHEIQAYLAAARKPALTDLQAGRLSAALYALKDRAKTFPELLEKARFALESRPIAADDAAAKALDAVSRGILRELTPILQTASWSKQELEAALTAFAGEKGMGFGKLAGPLRAALAGRTVTPSVFDMMLVIGRDETIARLEDAAAA</sequence>
<feature type="chain" id="PRO_0000367746" description="Glutamate--tRNA ligase 2">
    <location>
        <begin position="1"/>
        <end position="471"/>
    </location>
</feature>
<feature type="short sequence motif" description="'HIGH' region" evidence="1">
    <location>
        <begin position="15"/>
        <end position="25"/>
    </location>
</feature>
<feature type="short sequence motif" description="'KMSKS' region" evidence="1">
    <location>
        <begin position="243"/>
        <end position="247"/>
    </location>
</feature>
<feature type="binding site" evidence="1">
    <location>
        <position position="246"/>
    </location>
    <ligand>
        <name>ATP</name>
        <dbReference type="ChEBI" id="CHEBI:30616"/>
    </ligand>
</feature>
<organism>
    <name type="scientific">Cereibacter sphaeroides (strain ATCC 17025 / ATH 2.4.3)</name>
    <name type="common">Rhodobacter sphaeroides</name>
    <dbReference type="NCBI Taxonomy" id="349102"/>
    <lineage>
        <taxon>Bacteria</taxon>
        <taxon>Pseudomonadati</taxon>
        <taxon>Pseudomonadota</taxon>
        <taxon>Alphaproteobacteria</taxon>
        <taxon>Rhodobacterales</taxon>
        <taxon>Paracoccaceae</taxon>
        <taxon>Cereibacter</taxon>
    </lineage>
</organism>
<gene>
    <name evidence="1" type="primary">gltX2</name>
    <name type="ordered locus">Rsph17025_3092</name>
</gene>
<accession>A4WX62</accession>
<reference key="1">
    <citation type="submission" date="2007-04" db="EMBL/GenBank/DDBJ databases">
        <title>Complete sequence of chromosome of Rhodobacter sphaeroides ATCC 17025.</title>
        <authorList>
            <consortium name="US DOE Joint Genome Institute"/>
            <person name="Copeland A."/>
            <person name="Lucas S."/>
            <person name="Lapidus A."/>
            <person name="Barry K."/>
            <person name="Detter J.C."/>
            <person name="Glavina del Rio T."/>
            <person name="Hammon N."/>
            <person name="Israni S."/>
            <person name="Dalin E."/>
            <person name="Tice H."/>
            <person name="Pitluck S."/>
            <person name="Chertkov O."/>
            <person name="Brettin T."/>
            <person name="Bruce D."/>
            <person name="Han C."/>
            <person name="Schmutz J."/>
            <person name="Larimer F."/>
            <person name="Land M."/>
            <person name="Hauser L."/>
            <person name="Kyrpides N."/>
            <person name="Kim E."/>
            <person name="Richardson P."/>
            <person name="Mackenzie C."/>
            <person name="Choudhary M."/>
            <person name="Donohue T.J."/>
            <person name="Kaplan S."/>
        </authorList>
    </citation>
    <scope>NUCLEOTIDE SEQUENCE [LARGE SCALE GENOMIC DNA]</scope>
    <source>
        <strain>ATCC 17025 / ATH 2.4.3</strain>
    </source>
</reference>
<proteinExistence type="inferred from homology"/>
<name>SYE2_CERS5</name>
<protein>
    <recommendedName>
        <fullName evidence="1">Glutamate--tRNA ligase 2</fullName>
        <ecNumber evidence="1">6.1.1.17</ecNumber>
    </recommendedName>
    <alternativeName>
        <fullName evidence="1">Glutamyl-tRNA synthetase 2</fullName>
        <shortName evidence="1">GluRS 2</shortName>
    </alternativeName>
</protein>
<keyword id="KW-0030">Aminoacyl-tRNA synthetase</keyword>
<keyword id="KW-0067">ATP-binding</keyword>
<keyword id="KW-0963">Cytoplasm</keyword>
<keyword id="KW-0436">Ligase</keyword>
<keyword id="KW-0547">Nucleotide-binding</keyword>
<keyword id="KW-0648">Protein biosynthesis</keyword>
<comment type="function">
    <text evidence="1">Catalyzes the attachment of glutamate to tRNA(Glu) in a two-step reaction: glutamate is first activated by ATP to form Glu-AMP and then transferred to the acceptor end of tRNA(Glu).</text>
</comment>
<comment type="catalytic activity">
    <reaction evidence="1">
        <text>tRNA(Glu) + L-glutamate + ATP = L-glutamyl-tRNA(Glu) + AMP + diphosphate</text>
        <dbReference type="Rhea" id="RHEA:23540"/>
        <dbReference type="Rhea" id="RHEA-COMP:9663"/>
        <dbReference type="Rhea" id="RHEA-COMP:9680"/>
        <dbReference type="ChEBI" id="CHEBI:29985"/>
        <dbReference type="ChEBI" id="CHEBI:30616"/>
        <dbReference type="ChEBI" id="CHEBI:33019"/>
        <dbReference type="ChEBI" id="CHEBI:78442"/>
        <dbReference type="ChEBI" id="CHEBI:78520"/>
        <dbReference type="ChEBI" id="CHEBI:456215"/>
        <dbReference type="EC" id="6.1.1.17"/>
    </reaction>
</comment>
<comment type="subunit">
    <text evidence="1">Monomer.</text>
</comment>
<comment type="subcellular location">
    <subcellularLocation>
        <location evidence="1">Cytoplasm</location>
    </subcellularLocation>
</comment>
<comment type="similarity">
    <text evidence="1">Belongs to the class-I aminoacyl-tRNA synthetase family. Glutamate--tRNA ligase type 1 subfamily.</text>
</comment>
<evidence type="ECO:0000255" key="1">
    <source>
        <dbReference type="HAMAP-Rule" id="MF_00022"/>
    </source>
</evidence>